<feature type="chain" id="PRO_1000021901" description="Homoserine O-acetyltransferase">
    <location>
        <begin position="1"/>
        <end position="400"/>
    </location>
</feature>
<feature type="domain" description="AB hydrolase-1" evidence="1">
    <location>
        <begin position="64"/>
        <end position="374"/>
    </location>
</feature>
<feature type="region of interest" description="Disordered" evidence="2">
    <location>
        <begin position="1"/>
        <end position="22"/>
    </location>
</feature>
<feature type="active site" description="Nucleophile" evidence="1">
    <location>
        <position position="169"/>
    </location>
</feature>
<feature type="active site" evidence="1">
    <location>
        <position position="335"/>
    </location>
</feature>
<feature type="active site" evidence="1">
    <location>
        <position position="368"/>
    </location>
</feature>
<feature type="binding site" evidence="1">
    <location>
        <position position="239"/>
    </location>
    <ligand>
        <name>substrate</name>
    </ligand>
</feature>
<feature type="binding site" evidence="1">
    <location>
        <position position="369"/>
    </location>
    <ligand>
        <name>substrate</name>
    </ligand>
</feature>
<reference key="1">
    <citation type="submission" date="2006-01" db="EMBL/GenBank/DDBJ databases">
        <title>Complete sequence of Rhodopseudomonas palustris HaA2.</title>
        <authorList>
            <consortium name="US DOE Joint Genome Institute"/>
            <person name="Copeland A."/>
            <person name="Lucas S."/>
            <person name="Lapidus A."/>
            <person name="Barry K."/>
            <person name="Detter J.C."/>
            <person name="Glavina T."/>
            <person name="Hammon N."/>
            <person name="Israni S."/>
            <person name="Pitluck S."/>
            <person name="Chain P."/>
            <person name="Malfatti S."/>
            <person name="Shin M."/>
            <person name="Vergez L."/>
            <person name="Schmutz J."/>
            <person name="Larimer F."/>
            <person name="Land M."/>
            <person name="Hauser L."/>
            <person name="Pelletier D.A."/>
            <person name="Kyrpides N."/>
            <person name="Anderson I."/>
            <person name="Oda Y."/>
            <person name="Harwood C.S."/>
            <person name="Richardson P."/>
        </authorList>
    </citation>
    <scope>NUCLEOTIDE SEQUENCE [LARGE SCALE GENOMIC DNA]</scope>
    <source>
        <strain>HaA2</strain>
    </source>
</reference>
<protein>
    <recommendedName>
        <fullName evidence="1">Homoserine O-acetyltransferase</fullName>
        <shortName evidence="1">HAT</shortName>
        <ecNumber evidence="1">2.3.1.31</ecNumber>
    </recommendedName>
    <alternativeName>
        <fullName evidence="1">Homoserine transacetylase</fullName>
        <shortName evidence="1">HTA</shortName>
    </alternativeName>
</protein>
<dbReference type="EC" id="2.3.1.31" evidence="1"/>
<dbReference type="EMBL" id="CP000250">
    <property type="protein sequence ID" value="ABD08940.1"/>
    <property type="molecule type" value="Genomic_DNA"/>
</dbReference>
<dbReference type="RefSeq" id="WP_011443124.1">
    <property type="nucleotide sequence ID" value="NC_007778.1"/>
</dbReference>
<dbReference type="SMR" id="Q2IS70"/>
<dbReference type="STRING" id="316058.RPB_4252"/>
<dbReference type="ESTHER" id="rhop2-q2is70">
    <property type="family name" value="Homoserine_transacetylase"/>
</dbReference>
<dbReference type="KEGG" id="rpb:RPB_4252"/>
<dbReference type="eggNOG" id="COG2021">
    <property type="taxonomic scope" value="Bacteria"/>
</dbReference>
<dbReference type="HOGENOM" id="CLU_028760_1_2_5"/>
<dbReference type="OrthoDB" id="9800754at2"/>
<dbReference type="UniPathway" id="UPA00051">
    <property type="reaction ID" value="UER00074"/>
</dbReference>
<dbReference type="Proteomes" id="UP000008809">
    <property type="component" value="Chromosome"/>
</dbReference>
<dbReference type="GO" id="GO:0005737">
    <property type="term" value="C:cytoplasm"/>
    <property type="evidence" value="ECO:0007669"/>
    <property type="project" value="UniProtKB-SubCell"/>
</dbReference>
<dbReference type="GO" id="GO:0004414">
    <property type="term" value="F:homoserine O-acetyltransferase activity"/>
    <property type="evidence" value="ECO:0007669"/>
    <property type="project" value="UniProtKB-UniRule"/>
</dbReference>
<dbReference type="GO" id="GO:0009092">
    <property type="term" value="P:homoserine metabolic process"/>
    <property type="evidence" value="ECO:0007669"/>
    <property type="project" value="TreeGrafter"/>
</dbReference>
<dbReference type="GO" id="GO:0009086">
    <property type="term" value="P:methionine biosynthetic process"/>
    <property type="evidence" value="ECO:0007669"/>
    <property type="project" value="UniProtKB-UniRule"/>
</dbReference>
<dbReference type="FunFam" id="1.10.1740.110:FF:000001">
    <property type="entry name" value="Homoserine O-acetyltransferase"/>
    <property type="match status" value="1"/>
</dbReference>
<dbReference type="Gene3D" id="1.10.1740.110">
    <property type="match status" value="1"/>
</dbReference>
<dbReference type="Gene3D" id="3.40.50.1820">
    <property type="entry name" value="alpha/beta hydrolase"/>
    <property type="match status" value="1"/>
</dbReference>
<dbReference type="HAMAP" id="MF_00296">
    <property type="entry name" value="MetX_acyltransf"/>
    <property type="match status" value="1"/>
</dbReference>
<dbReference type="InterPro" id="IPR000073">
    <property type="entry name" value="AB_hydrolase_1"/>
</dbReference>
<dbReference type="InterPro" id="IPR029058">
    <property type="entry name" value="AB_hydrolase_fold"/>
</dbReference>
<dbReference type="InterPro" id="IPR008220">
    <property type="entry name" value="HAT_MetX-like"/>
</dbReference>
<dbReference type="NCBIfam" id="TIGR01392">
    <property type="entry name" value="homoserO_Ac_trn"/>
    <property type="match status" value="1"/>
</dbReference>
<dbReference type="NCBIfam" id="NF001209">
    <property type="entry name" value="PRK00175.1"/>
    <property type="match status" value="1"/>
</dbReference>
<dbReference type="PANTHER" id="PTHR32268">
    <property type="entry name" value="HOMOSERINE O-ACETYLTRANSFERASE"/>
    <property type="match status" value="1"/>
</dbReference>
<dbReference type="PANTHER" id="PTHR32268:SF11">
    <property type="entry name" value="HOMOSERINE O-ACETYLTRANSFERASE"/>
    <property type="match status" value="1"/>
</dbReference>
<dbReference type="Pfam" id="PF00561">
    <property type="entry name" value="Abhydrolase_1"/>
    <property type="match status" value="1"/>
</dbReference>
<dbReference type="PIRSF" id="PIRSF000443">
    <property type="entry name" value="Homoser_Ac_trans"/>
    <property type="match status" value="1"/>
</dbReference>
<dbReference type="SUPFAM" id="SSF53474">
    <property type="entry name" value="alpha/beta-Hydrolases"/>
    <property type="match status" value="1"/>
</dbReference>
<gene>
    <name evidence="1" type="primary">metXA</name>
    <name type="ordered locus">RPB_4252</name>
</gene>
<name>METXA_RHOP2</name>
<keyword id="KW-0012">Acyltransferase</keyword>
<keyword id="KW-0028">Amino-acid biosynthesis</keyword>
<keyword id="KW-0963">Cytoplasm</keyword>
<keyword id="KW-0486">Methionine biosynthesis</keyword>
<keyword id="KW-1185">Reference proteome</keyword>
<keyword id="KW-0808">Transferase</keyword>
<evidence type="ECO:0000255" key="1">
    <source>
        <dbReference type="HAMAP-Rule" id="MF_00296"/>
    </source>
</evidence>
<evidence type="ECO:0000256" key="2">
    <source>
        <dbReference type="SAM" id="MobiDB-lite"/>
    </source>
</evidence>
<sequence length="400" mass="43581">MMNVHPVKGPVATGGERPHEADHPTSLVASFGADQPLRLDCGVDLAPFQIAYQTYGTLNADKSNAILVCHALTMDQHIANVHPITGKPGGWLTLVGPGKPIDTDRYFVICSNVIGSCMGSTGPASTNPATGKVWGLDFPVITIPDMVRAQAMLVDRLGIDKLFCVVGGSMGGMQVLQWSVAYPERVFSAMPIACATRHSAQNIAFHELGRQAVMADPDWAHGRYVETGAHPHRGLAVARMAAHITYLSDAALHRKFGRRMQDRELPTFSFDADFQVESYLRYQGSSFVERFDANSYLYLTRAMDYFDIAADHHGVLAAAFRGTQTRFCVVSFTSDWLFPTPESRAIVHALNAGGARVSFAEVETDKGHDAFLLDEPEFIDIARAFLHSAATARGLDKAGR</sequence>
<proteinExistence type="inferred from homology"/>
<organism>
    <name type="scientific">Rhodopseudomonas palustris (strain HaA2)</name>
    <dbReference type="NCBI Taxonomy" id="316058"/>
    <lineage>
        <taxon>Bacteria</taxon>
        <taxon>Pseudomonadati</taxon>
        <taxon>Pseudomonadota</taxon>
        <taxon>Alphaproteobacteria</taxon>
        <taxon>Hyphomicrobiales</taxon>
        <taxon>Nitrobacteraceae</taxon>
        <taxon>Rhodopseudomonas</taxon>
    </lineage>
</organism>
<accession>Q2IS70</accession>
<comment type="function">
    <text evidence="1">Transfers an acetyl group from acetyl-CoA to L-homoserine, forming acetyl-L-homoserine.</text>
</comment>
<comment type="catalytic activity">
    <reaction evidence="1">
        <text>L-homoserine + acetyl-CoA = O-acetyl-L-homoserine + CoA</text>
        <dbReference type="Rhea" id="RHEA:13701"/>
        <dbReference type="ChEBI" id="CHEBI:57287"/>
        <dbReference type="ChEBI" id="CHEBI:57288"/>
        <dbReference type="ChEBI" id="CHEBI:57476"/>
        <dbReference type="ChEBI" id="CHEBI:57716"/>
        <dbReference type="EC" id="2.3.1.31"/>
    </reaction>
</comment>
<comment type="pathway">
    <text evidence="1">Amino-acid biosynthesis; L-methionine biosynthesis via de novo pathway; O-acetyl-L-homoserine from L-homoserine: step 1/1.</text>
</comment>
<comment type="subunit">
    <text evidence="1">Homodimer.</text>
</comment>
<comment type="subcellular location">
    <subcellularLocation>
        <location evidence="1">Cytoplasm</location>
    </subcellularLocation>
</comment>
<comment type="similarity">
    <text evidence="1">Belongs to the AB hydrolase superfamily. MetX family.</text>
</comment>